<sequence>MSDEADEAYSVTEQLTMTGINRIRQKINAHGIPVYLCEACGNPIPEARRKIFPGVTLCVECQAYQERQRKHYA</sequence>
<organism>
    <name type="scientific">Escherichia coli (strain K12)</name>
    <dbReference type="NCBI Taxonomy" id="83333"/>
    <lineage>
        <taxon>Bacteria</taxon>
        <taxon>Pseudomonadati</taxon>
        <taxon>Pseudomonadota</taxon>
        <taxon>Gammaproteobacteria</taxon>
        <taxon>Enterobacterales</taxon>
        <taxon>Enterobacteriaceae</taxon>
        <taxon>Escherichia</taxon>
    </lineage>
</organism>
<accession>P41065</accession>
<proteinExistence type="evidence at protein level"/>
<reference key="1">
    <citation type="journal article" date="1994" name="J. Bacteriol.">
        <title>Molecular analysis of the F plasmid traVR region: traV encodes a lipoprotein.</title>
        <authorList>
            <person name="Doran T.J."/>
            <person name="Loh S.M."/>
            <person name="Firth N."/>
            <person name="Skurray R.A."/>
        </authorList>
    </citation>
    <scope>NUCLEOTIDE SEQUENCE [GENOMIC DNA]</scope>
</reference>
<reference key="2">
    <citation type="journal article" date="1994" name="Microbiol. Rev.">
        <title>Analysis of the sequence and gene products of the transfer region of the F sex factor.</title>
        <authorList>
            <person name="Frost L.S."/>
            <person name="Ippen-Ihler K."/>
            <person name="Skurray R.A."/>
        </authorList>
    </citation>
    <scope>NUCLEOTIDE SEQUENCE [GENOMIC DNA]</scope>
</reference>
<reference key="3">
    <citation type="submission" date="2000-04" db="EMBL/GenBank/DDBJ databases">
        <title>Complete nucleotide sequence of the F plasmid: its implications for organization and diversification of plasmid genomes.</title>
        <authorList>
            <person name="Shimizu H."/>
            <person name="Saitoh Y."/>
            <person name="Suda Y."/>
            <person name="Uehara K."/>
            <person name="Sampei G."/>
            <person name="Mizobuchi K."/>
        </authorList>
    </citation>
    <scope>NUCLEOTIDE SEQUENCE [LARGE SCALE GENOMIC DNA]</scope>
    <source>
        <strain>K12 / CR63</strain>
    </source>
</reference>
<reference key="4">
    <citation type="journal article" date="1990" name="Gene">
        <title>Nucleotide sequence of the F plasmid gene, traC, and identification of its product.</title>
        <authorList>
            <person name="Schandel K.A."/>
            <person name="Maneewannakul S."/>
            <person name="Vonder Haar R.A."/>
            <person name="Ippen-Ihler K."/>
            <person name="Webster R.E."/>
        </authorList>
    </citation>
    <scope>NUCLEOTIDE SEQUENCE [GENOMIC DNA] OF 39-73</scope>
</reference>
<protein>
    <recommendedName>
        <fullName>Protein TraR</fullName>
    </recommendedName>
</protein>
<evidence type="ECO:0000255" key="1">
    <source>
        <dbReference type="PROSITE-ProRule" id="PRU00510"/>
    </source>
</evidence>
<evidence type="ECO:0007829" key="2">
    <source>
        <dbReference type="PDB" id="6PST"/>
    </source>
</evidence>
<dbReference type="EMBL" id="U01159">
    <property type="protein sequence ID" value="AAC44195.1"/>
    <property type="molecule type" value="Genomic_DNA"/>
</dbReference>
<dbReference type="EMBL" id="M30936">
    <property type="status" value="NOT_ANNOTATED_CDS"/>
    <property type="molecule type" value="Genomic_DNA"/>
</dbReference>
<dbReference type="EMBL" id="AP001918">
    <property type="protein sequence ID" value="BAA97953.1"/>
    <property type="molecule type" value="Genomic_DNA"/>
</dbReference>
<dbReference type="PIR" id="PQ0135">
    <property type="entry name" value="PQ0135"/>
</dbReference>
<dbReference type="RefSeq" id="NP_061462.1">
    <property type="nucleotide sequence ID" value="NC_002483.1"/>
</dbReference>
<dbReference type="RefSeq" id="NP_862928.1">
    <property type="nucleotide sequence ID" value="NC_004998.1"/>
</dbReference>
<dbReference type="RefSeq" id="WP_001278689.1">
    <property type="nucleotide sequence ID" value="NZ_SSUW01000046.1"/>
</dbReference>
<dbReference type="RefSeq" id="YP_001965439.1">
    <property type="nucleotide sequence ID" value="NC_010862.1"/>
</dbReference>
<dbReference type="RefSeq" id="YP_003829015.1">
    <property type="nucleotide sequence ID" value="NC_014382.1"/>
</dbReference>
<dbReference type="RefSeq" id="YP_008997949.1">
    <property type="nucleotide sequence ID" value="NC_023315.1"/>
</dbReference>
<dbReference type="RefSeq" id="YP_009060148.1">
    <property type="nucleotide sequence ID" value="NC_024956.1"/>
</dbReference>
<dbReference type="RefSeq" id="YP_009068342.1">
    <property type="nucleotide sequence ID" value="NC_025139.1"/>
</dbReference>
<dbReference type="RefSeq" id="YP_009070607.1">
    <property type="nucleotide sequence ID" value="NC_025175.1"/>
</dbReference>
<dbReference type="RefSeq" id="YP_009070976.1">
    <property type="nucleotide sequence ID" value="NC_025177.1"/>
</dbReference>
<dbReference type="RefSeq" id="YP_009071239.1">
    <property type="nucleotide sequence ID" value="NC_025179.1"/>
</dbReference>
<dbReference type="PDB" id="5W1S">
    <property type="method" value="X-ray"/>
    <property type="resolution" value="3.81 A"/>
    <property type="chains" value="M/N=1-73"/>
</dbReference>
<dbReference type="PDB" id="6N57">
    <property type="method" value="EM"/>
    <property type="resolution" value="3.70 A"/>
    <property type="chains" value="M=2-73"/>
</dbReference>
<dbReference type="PDB" id="6N58">
    <property type="method" value="EM"/>
    <property type="resolution" value="3.78 A"/>
    <property type="chains" value="M=2-73"/>
</dbReference>
<dbReference type="PDB" id="6PSQ">
    <property type="method" value="EM"/>
    <property type="resolution" value="3.40 A"/>
    <property type="chains" value="N=2-73"/>
</dbReference>
<dbReference type="PDB" id="6PSR">
    <property type="method" value="EM"/>
    <property type="resolution" value="3.40 A"/>
    <property type="chains" value="N=2-73"/>
</dbReference>
<dbReference type="PDB" id="6PSS">
    <property type="method" value="EM"/>
    <property type="resolution" value="3.50 A"/>
    <property type="chains" value="N=2-73"/>
</dbReference>
<dbReference type="PDB" id="6PST">
    <property type="method" value="EM"/>
    <property type="resolution" value="3.00 A"/>
    <property type="chains" value="N=2-73"/>
</dbReference>
<dbReference type="PDB" id="6PSU">
    <property type="method" value="EM"/>
    <property type="resolution" value="3.90 A"/>
    <property type="chains" value="N=2-73"/>
</dbReference>
<dbReference type="PDB" id="6PSV">
    <property type="method" value="EM"/>
    <property type="resolution" value="3.50 A"/>
    <property type="chains" value="N=2-73"/>
</dbReference>
<dbReference type="PDB" id="6PSW">
    <property type="method" value="EM"/>
    <property type="resolution" value="3.70 A"/>
    <property type="chains" value="N=2-73"/>
</dbReference>
<dbReference type="PDBsum" id="5W1S"/>
<dbReference type="PDBsum" id="6N57"/>
<dbReference type="PDBsum" id="6N58"/>
<dbReference type="PDBsum" id="6PSQ"/>
<dbReference type="PDBsum" id="6PSR"/>
<dbReference type="PDBsum" id="6PSS"/>
<dbReference type="PDBsum" id="6PST"/>
<dbReference type="PDBsum" id="6PSU"/>
<dbReference type="PDBsum" id="6PSV"/>
<dbReference type="PDBsum" id="6PSW"/>
<dbReference type="EMDB" id="EMD-0348"/>
<dbReference type="EMDB" id="EMD-0349"/>
<dbReference type="EMDB" id="EMD-20460"/>
<dbReference type="EMDB" id="EMD-20461"/>
<dbReference type="EMDB" id="EMD-20462"/>
<dbReference type="EMDB" id="EMD-20463"/>
<dbReference type="EMDB" id="EMD-20464"/>
<dbReference type="EMDB" id="EMD-20465"/>
<dbReference type="EMDB" id="EMD-20466"/>
<dbReference type="SMR" id="P41065"/>
<dbReference type="GeneID" id="83576008"/>
<dbReference type="PATRIC" id="fig|83333.107.peg.630"/>
<dbReference type="OrthoDB" id="962301at2"/>
<dbReference type="PhylomeDB" id="P41065"/>
<dbReference type="PRO" id="PR:P41065"/>
<dbReference type="GO" id="GO:0008270">
    <property type="term" value="F:zinc ion binding"/>
    <property type="evidence" value="ECO:0007669"/>
    <property type="project" value="UniProtKB-KW"/>
</dbReference>
<dbReference type="Gene3D" id="1.20.120.910">
    <property type="entry name" value="DksA, coiled-coil domain"/>
    <property type="match status" value="1"/>
</dbReference>
<dbReference type="InterPro" id="IPR020460">
    <property type="entry name" value="Znf_C4-type_bac"/>
</dbReference>
<dbReference type="InterPro" id="IPR012783">
    <property type="entry name" value="Znf_C4_TraR"/>
</dbReference>
<dbReference type="InterPro" id="IPR000962">
    <property type="entry name" value="Znf_DskA_TraR"/>
</dbReference>
<dbReference type="InterPro" id="IPR020458">
    <property type="entry name" value="Znf_DskA_TraR_CS"/>
</dbReference>
<dbReference type="NCBIfam" id="TIGR02419">
    <property type="entry name" value="C4_traR_proteo"/>
    <property type="match status" value="1"/>
</dbReference>
<dbReference type="NCBIfam" id="NF010268">
    <property type="entry name" value="PRK13715.1"/>
    <property type="match status" value="1"/>
</dbReference>
<dbReference type="PANTHER" id="PTHR38777:SF1">
    <property type="entry name" value="DNAK SUPPRESSOR PROTEIN"/>
    <property type="match status" value="1"/>
</dbReference>
<dbReference type="PANTHER" id="PTHR38777">
    <property type="entry name" value="FELS-2 PROPHAGE PROTEIN"/>
    <property type="match status" value="1"/>
</dbReference>
<dbReference type="Pfam" id="PF01258">
    <property type="entry name" value="zf-dskA_traR"/>
    <property type="match status" value="1"/>
</dbReference>
<dbReference type="PRINTS" id="PR00618">
    <property type="entry name" value="DKSAZNFINGER"/>
</dbReference>
<dbReference type="SUPFAM" id="SSF57716">
    <property type="entry name" value="Glucocorticoid receptor-like (DNA-binding domain)"/>
    <property type="match status" value="1"/>
</dbReference>
<dbReference type="PROSITE" id="PS01102">
    <property type="entry name" value="ZF_DKSA_1"/>
    <property type="match status" value="1"/>
</dbReference>
<dbReference type="PROSITE" id="PS51128">
    <property type="entry name" value="ZF_DKSA_2"/>
    <property type="match status" value="1"/>
</dbReference>
<name>TRAR_ECOLI</name>
<geneLocation type="plasmid">
    <name>F</name>
</geneLocation>
<feature type="chain" id="PRO_0000187547" description="Protein TraR">
    <location>
        <begin position="1"/>
        <end position="73"/>
    </location>
</feature>
<feature type="zinc finger region" description="dksA C4-type" evidence="1">
    <location>
        <begin position="37"/>
        <end position="61"/>
    </location>
</feature>
<feature type="turn" evidence="2">
    <location>
        <begin position="3"/>
        <end position="5"/>
    </location>
</feature>
<feature type="helix" evidence="2">
    <location>
        <begin position="6"/>
        <end position="25"/>
    </location>
</feature>
<feature type="turn" evidence="2">
    <location>
        <begin position="38"/>
        <end position="40"/>
    </location>
</feature>
<feature type="helix" evidence="2">
    <location>
        <begin position="46"/>
        <end position="51"/>
    </location>
</feature>
<feature type="helix" evidence="2">
    <location>
        <begin position="59"/>
        <end position="71"/>
    </location>
</feature>
<gene>
    <name type="primary">traR</name>
    <name type="ordered locus">ECOK12F083</name>
</gene>
<keyword id="KW-0002">3D-structure</keyword>
<keyword id="KW-0479">Metal-binding</keyword>
<keyword id="KW-0614">Plasmid</keyword>
<keyword id="KW-0862">Zinc</keyword>
<keyword id="KW-0863">Zinc-finger</keyword>